<gene>
    <name evidence="14" type="primary">dpy-28</name>
    <name evidence="14" type="ORF">Y39A1B.3</name>
</gene>
<name>CND1_CAEEL</name>
<accession>Q9U2M1</accession>
<sequence>MPRKQRVVTTPSPPTSDEDEDMDFGSTSQQQQQQPTRNNDGLSGFKSITEIIAEADNNIPSEQIDKDIDSFSSYSDISDWRGIPKFFPSLSSLSRRASTYENWENRFKVVDYLVSCSGALKDSVSDYVADYFEKNESGEDHSVDVELVHAVSMFVILTQRLTVQLQLYVSKSIASANQQAKRGTGRGGRQVDLDDDIVKWKDIQRHRMINCLLELLELRVDTVAGTKKKAIQYVFAPDVMEKDFLLRFLDTVVQLLEDPENMARSSQQWISHYFRILKVLSADYGMTKDVANCLFTALSHSYLEAANTFPFIEPLVTLMKENGEGSGRIYQPLRNVLQLVICRVGNLYAGERAEKPPPKAFCMMVQSLAINVHDLMLQDITHVYRLLQNQHVNVRMSTLHALADMFSSSYLSQSLCDTFASRRLKREGIFKRLLAHTNDEATNVRSKAVSLLRNIMENRRIPEEFESCGLLSIVGSRLNDKSVQVRKSAIQFLTTFLDNNRHGHDFNREMHQLKLNAKCSELRNAEEPQSKAIQGAENAFRQNLFTLTAGVRVEVYDIFRRRYRVEPERSITDILTGLFSPGSGNRLVRYYVAQENFPFRDRIPSLRERRSDDMEDDDDDTVSLEDDDMTSLVSEVVKWVVAQAEEDYVTFKVQLTQMDDDQLLENEQEARDRNNQIMQLRAQVQQLINKMSIEQELSRCVTIALRCVLNGETAEIKEGIRFLTRCKLFEITGADDAIRSMCSLVWRPSADILNELIEAAEDMFISRLDGNEKASERDSSTVENLMKAMNGVTEKDRPSVEEVIYLLAATELVHVDSDKNKVPRKRRPIEANVINKLWMIALDMSHGINSRKIDALRILYPISRSERGIAEARSRLRVVQKKLMDPELAVDALRIISILGTPTKLENEQDAYSRPLFKIHQDDSLWKSIEKLFFYEIMKADDNPDRDWFGVIRLTITTILSLSMDVNVMLPKLASHFVYRTKRISDFFLFYCDQVDDATDDTRKKMAQRRREYWALTYCRVMEKLMAFIGEVAVQLNAYIQVTIPKLHTRYVSKMVDAEKNDANIREEPVRFLSDLEKSVAQRKTIFTVPQDTTPGATSNDLHHLVSVMCDKRLFVPNKLMGRLLPIVVYGMRCKIMPTRIRHAATVAYGKMMPLSAEISAFAAPSFFSAMTKSSSILLRCNLVAACCDFAFAQPTLFELFAQSLFRMSQDESPLARESTILVLSHLMSNDMIQTRGVLSEAARCICDPTRAVRDVAQSFFKELNSRTDTIIQLLPEFLYHLSNGNERMSFKSYKTVFEFLIQLLKDKPKASADSMIDRVCIKFSNTDMNDSETPKYLLVALAKFVQNDGGLHRLQDNWRHWSKFMCHPSVAKEYRMMVEHMHSTSKNDEFKSQCVELIDNINKIESEGLRKEDVAIGSSITKNKGRAKKNPTTMSGSSRTTSRAANSRRRAPPPAQSDEDDSDSDDAPAAPRSAARRKAKKSAVADDDSDSDEFMLDD</sequence>
<evidence type="ECO:0000250" key="1">
    <source>
        <dbReference type="UniProtKB" id="Q9YHY6"/>
    </source>
</evidence>
<evidence type="ECO:0000255" key="2">
    <source>
        <dbReference type="PIRNR" id="PIRNR017127"/>
    </source>
</evidence>
<evidence type="ECO:0000256" key="3">
    <source>
        <dbReference type="SAM" id="MobiDB-lite"/>
    </source>
</evidence>
<evidence type="ECO:0000269" key="4">
    <source>
    </source>
</evidence>
<evidence type="ECO:0000269" key="5">
    <source>
    </source>
</evidence>
<evidence type="ECO:0000269" key="6">
    <source>
    </source>
</evidence>
<evidence type="ECO:0000269" key="7">
    <source>
    </source>
</evidence>
<evidence type="ECO:0000269" key="8">
    <source>
    </source>
</evidence>
<evidence type="ECO:0000269" key="9">
    <source>
    </source>
</evidence>
<evidence type="ECO:0000269" key="10">
    <source>
    </source>
</evidence>
<evidence type="ECO:0000269" key="11">
    <source>
    </source>
</evidence>
<evidence type="ECO:0000305" key="12"/>
<evidence type="ECO:0000312" key="13">
    <source>
        <dbReference type="Proteomes" id="UP000001940"/>
    </source>
</evidence>
<evidence type="ECO:0000312" key="14">
    <source>
        <dbReference type="WormBase" id="Y39A1B.3"/>
    </source>
</evidence>
<protein>
    <recommendedName>
        <fullName evidence="2">Condensin complex subunit 1</fullName>
    </recommendedName>
    <alternativeName>
        <fullName evidence="12">Non-SMC condensin I complex subunit dpy-28</fullName>
    </alternativeName>
</protein>
<proteinExistence type="evidence at protein level"/>
<comment type="function">
    <text evidence="1 2 4 5 6 7 8 11">Required for both chromosome condensation and segregation during mitosis and meiosis and X-chromosome dosage compensation depending on its binding partners (PubMed:18198337, PubMed:19119011, PubMed:19781752, PubMed:3779843). Regulatory subunit of the condensin I complex, a complex required for conversion of interphase chromatin into mitotic-like condense chromosomes (PubMed:19119011, PubMed:19781752). The condensin I complex probably introduces positive supercoils into relaxed DNA in the presence of type I topoisomerases and converts nicked DNA into positive knotted forms in the presence of type II topoisomerases (By similarity). The condensin I complex function is required for proper chromosome segregation in mitosis and meiosis (PubMed:19119011). As a member of the condensin I complex, further controls the crossover number and distribution in meiosis by restricting double strand break formation, possibly by influencing higher-order chromosome structure (PubMed:18198337, PubMed:19781752). Plays a role in robust cytokinesis upon presence of chromatin obstructions (PubMed:23684975). Also a member of the condensin I-like dosage compensation complex that associates specifically with hermaphrodite X chromosomes to reduce their gene transcription during interphase, possibly through chromatin reorganization (PubMed:15557118, PubMed:19119011, PubMed:3779843).</text>
</comment>
<comment type="subunit">
    <text evidence="4 5 6 7 10">Component of the condensin I complex, which contains the mix-1/SMC2 and smc-4/SMC4 heterodimer, and three non SMC subunits that probably regulate the complex: dpy-26, capg-1 and dpy-28 (PubMed:18198337, PubMed:19119011, PubMed:19781752). Within the complex, interacts with dpy-26 and smc-4 (PubMed:19119011, PubMed:19781752, PubMed:28301465). Component of the dosage compensation complex, which consist of the condensin I like components mix-1/SMC2 and dpy-27/SMC4, and the three non SMC subunits dpy-26, capg-1 and dpy-28 (PubMed:15557118, PubMed:18198337, PubMed:19119011, PubMed:19781752). Within the complex, interacts with mix-1, dpy-27, dpy-26 and capg-1 (PubMed:15557118, PubMed:18198337, PubMed:19119011, PubMed:28301465). Interacts with smcl-1 (PubMed:28301465).</text>
</comment>
<comment type="subcellular location">
    <subcellularLocation>
        <location evidence="5">Nucleus</location>
    </subcellularLocation>
    <subcellularLocation>
        <location evidence="5">Chromosome</location>
    </subcellularLocation>
    <text evidence="5">During mitosis, localizes to condensed chromosomes in both sexes. In interphase cells, diffusely distributed in nuclei of hermaphrodite embryos prior to the onset of dosage compensation. Localizes to the X chromosome after the 40-cell stage when dosage compensation is initiated in hermaphrodite (XX) but not in male (X0) embryos, where it remains diffusely nuclear.</text>
</comment>
<comment type="tissue specificity">
    <text evidence="5">Expressed in somatic and germline tissues (at protein level).</text>
</comment>
<comment type="developmental stage">
    <text evidence="5">Associates with meiotic and mitotic chromosomes prior to the onset of dosage compensation and with hermaphrodite X chromosomes after the onset of dosage compensation (at protein level).</text>
</comment>
<comment type="PTM">
    <text evidence="9">Sumoylated. Sumoylated in the context of the dosage compensation complex but not in the condensin I complex. Sumoylation is important for assembly of the dosage compensation complex and its robust binding to the X chromosome.</text>
</comment>
<comment type="disruption phenotype">
    <text evidence="5 6 7">Results in high larval lethality in hermaphrodites, and survivors exhibit a XX-specific shorter and stouter body morphology (PubMed:18198337). Higher percentage of spontaneous males through X chromosome non-disjunction (PubMed:18198337). Increased number of crossovers, redistribution of crossovers and a reduction in crossover interference in meiosis (PubMed:18198337). Increased number of rad-51 foci in early to mid-pachytene indicating double strand break formation (PubMed:18198337, PubMed:19781752). Increase in X chromosome axis length indicating aberrant chromosome structure (PubMed:19781752). RNAi-mediated knockdown results in chromosome segregation defects in mitosis (PubMed:19119011).</text>
</comment>
<comment type="similarity">
    <text evidence="2">Belongs to the CND1 (condensin subunit 1) family.</text>
</comment>
<reference evidence="13" key="1">
    <citation type="journal article" date="1998" name="Science">
        <title>Genome sequence of the nematode C. elegans: a platform for investigating biology.</title>
        <authorList>
            <consortium name="The C. elegans sequencing consortium"/>
        </authorList>
    </citation>
    <scope>NUCLEOTIDE SEQUENCE [LARGE SCALE GENOMIC DNA]</scope>
    <source>
        <strain evidence="13">Bristol N2</strain>
    </source>
</reference>
<reference evidence="12" key="2">
    <citation type="journal article" date="1986" name="Cell">
        <title>Caenorhabditis elegans compensates for the difference in X chromosome dosage between the sexes by regulating transcript levels.</title>
        <authorList>
            <person name="Meyer B.J."/>
            <person name="Casson L.P."/>
        </authorList>
    </citation>
    <scope>FUNCTION</scope>
    <scope>MUTAGENESIS OF GLY-1122</scope>
</reference>
<reference evidence="12" key="3">
    <citation type="journal article" date="2004" name="J. Cell Biol.">
        <title>Condensin restructures chromosomes in preparation for meiotic divisions.</title>
        <authorList>
            <person name="Chan R.C."/>
            <person name="Severson A.F."/>
            <person name="Meyer B.J."/>
        </authorList>
    </citation>
    <scope>FUNCTION</scope>
    <scope>IDENTIFICATION IN A DOSAGE COMPENSATION COMPLEX</scope>
    <scope>INTERACTION WITH MIX-1; DPY-27 AND DPY-26</scope>
</reference>
<reference evidence="12" key="4">
    <citation type="journal article" date="2008" name="Genes Dev.">
        <title>Meiotic crossover number and distribution are regulated by a dosage compensation protein that resembles a condensin subunit.</title>
        <authorList>
            <person name="Tsai C.J."/>
            <person name="Mets D.G."/>
            <person name="Albrecht M.R."/>
            <person name="Nix P."/>
            <person name="Chan A."/>
            <person name="Meyer B.J."/>
        </authorList>
    </citation>
    <scope>FUNCTION</scope>
    <scope>IDENTIFICATION IN A DOSAGE COMPENSATION COMPLEX</scope>
    <scope>INTERACTION WITH MIX-1; DPY-26 AND DPY-27</scope>
    <scope>SUBCELLULAR LOCATION</scope>
    <scope>TISSUE SPECIFICITY</scope>
    <scope>DEVELOPMENTAL STAGE</scope>
    <scope>DISRUPTION PHENOTYPE</scope>
</reference>
<reference evidence="12" key="5">
    <citation type="journal article" date="2009" name="Cell">
        <title>Condensins regulate meiotic DNA break distribution, thus crossover frequency, by controlling chromosome structure.</title>
        <authorList>
            <person name="Mets D.G."/>
            <person name="Meyer B.J."/>
        </authorList>
    </citation>
    <scope>FUNCTION</scope>
    <scope>IDENTIFICATION IN A CONDENSIN I COMPLEX AND IN A DOSAGE COMPENSATION COMPLEX</scope>
    <scope>INTERACTION WITH DPY-26 AND SMC-4</scope>
    <scope>DISRUPTION PHENOTYPE</scope>
    <scope>MUTAGENESIS OF GLY-1122</scope>
</reference>
<reference evidence="12" key="6">
    <citation type="journal article" date="2009" name="Curr. Biol.">
        <title>Three distinct condensin complexes control C. elegans chromosome dynamics.</title>
        <authorList>
            <person name="Csankovszki G."/>
            <person name="Collette K."/>
            <person name="Spahl K."/>
            <person name="Carey J."/>
            <person name="Snyder M."/>
            <person name="Petty E."/>
            <person name="Patel U."/>
            <person name="Tabuchi T."/>
            <person name="Liu H."/>
            <person name="McLeod I."/>
            <person name="Thompson J."/>
            <person name="Sarkeshik A."/>
            <person name="Sarkesik A."/>
            <person name="Yates J."/>
            <person name="Meyer B.J."/>
            <person name="Hagstrom K."/>
        </authorList>
    </citation>
    <scope>FUNCTION</scope>
    <scope>IDENTIFICATION IN A CONDENSIN I COMPLEX AND IN A DOSAGE COMPENSATION COMPLEX</scope>
    <scope>INTERACTION WITH DPY-27; DPY-26; CAPG-1 AND SMC-4</scope>
    <scope>DISRUPTION PHENOTYPE</scope>
</reference>
<reference key="7">
    <citation type="journal article" date="2013" name="Curr. Biol.">
        <title>Condensin and the spindle midzone prevent cytokinesis failure induced by chromatin bridges in C. elegans embryos.</title>
        <authorList>
            <person name="Bembenek J.N."/>
            <person name="Verbrugghe K.J."/>
            <person name="Khanikar J."/>
            <person name="Csankovszki G."/>
            <person name="Chan R.C."/>
        </authorList>
    </citation>
    <scope>FUNCTION</scope>
</reference>
<reference key="8">
    <citation type="journal article" date="2013" name="Proc. Natl. Acad. Sci. U.S.A.">
        <title>SUMOylation is essential for sex-specific assembly and function of the Caenorhabditis elegans dosage compensation complex on X chromosomes.</title>
        <authorList>
            <person name="Pferdehirt R.R."/>
            <person name="Meyer B.J."/>
        </authorList>
    </citation>
    <scope>SUMOYLATION</scope>
</reference>
<reference key="9">
    <citation type="journal article" date="2017" name="PLoS Genet.">
        <title>An SMC-like protein binds and regulates Caenorhabditis elegans condensins.</title>
        <authorList>
            <person name="Chao L.F."/>
            <person name="Singh M."/>
            <person name="Thompson J."/>
            <person name="Yates J.R. III"/>
            <person name="Hagstrom K.A."/>
        </authorList>
    </citation>
    <scope>INTERACTION WITH SMCL-1; DPY-27 AND DPY-26</scope>
    <scope>IDENTIFICATION BY MASS SPECTROMETRY</scope>
</reference>
<feature type="chain" id="PRO_0000439858" description="Condensin complex subunit 1">
    <location>
        <begin position="1"/>
        <end position="1499"/>
    </location>
</feature>
<feature type="region of interest" description="Disordered" evidence="3">
    <location>
        <begin position="1"/>
        <end position="43"/>
    </location>
</feature>
<feature type="region of interest" description="Disordered" evidence="3">
    <location>
        <begin position="1421"/>
        <end position="1499"/>
    </location>
</feature>
<feature type="compositionally biased region" description="Low complexity" evidence="3">
    <location>
        <begin position="1432"/>
        <end position="1446"/>
    </location>
</feature>
<feature type="compositionally biased region" description="Acidic residues" evidence="3">
    <location>
        <begin position="1458"/>
        <end position="1467"/>
    </location>
</feature>
<feature type="compositionally biased region" description="Acidic residues" evidence="3">
    <location>
        <begin position="1486"/>
        <end position="1499"/>
    </location>
</feature>
<feature type="mutagenesis site" description="In y1; leads to XX-specific lethality. Surviving hermaphrodites exhibit increased X-linked gene transcripts and a shorter and stouter body morphology. XO animals are wild-type males. Defects in mitotic chromosome segregation." evidence="7 11">
    <original>G</original>
    <variation>E</variation>
    <location>
        <position position="1122"/>
    </location>
</feature>
<keyword id="KW-0131">Cell cycle</keyword>
<keyword id="KW-0132">Cell division</keyword>
<keyword id="KW-0158">Chromosome</keyword>
<keyword id="KW-0226">DNA condensation</keyword>
<keyword id="KW-0469">Meiosis</keyword>
<keyword id="KW-0498">Mitosis</keyword>
<keyword id="KW-0539">Nucleus</keyword>
<keyword id="KW-1185">Reference proteome</keyword>
<keyword id="KW-0832">Ubl conjugation</keyword>
<organism evidence="13">
    <name type="scientific">Caenorhabditis elegans</name>
    <dbReference type="NCBI Taxonomy" id="6239"/>
    <lineage>
        <taxon>Eukaryota</taxon>
        <taxon>Metazoa</taxon>
        <taxon>Ecdysozoa</taxon>
        <taxon>Nematoda</taxon>
        <taxon>Chromadorea</taxon>
        <taxon>Rhabditida</taxon>
        <taxon>Rhabditina</taxon>
        <taxon>Rhabditomorpha</taxon>
        <taxon>Rhabditoidea</taxon>
        <taxon>Rhabditidae</taxon>
        <taxon>Peloderinae</taxon>
        <taxon>Caenorhabditis</taxon>
    </lineage>
</organism>
<dbReference type="EMBL" id="BX284603">
    <property type="protein sequence ID" value="CAA16340.3"/>
    <property type="molecule type" value="Genomic_DNA"/>
</dbReference>
<dbReference type="PIR" id="C88589">
    <property type="entry name" value="C88589"/>
</dbReference>
<dbReference type="PIR" id="T26747">
    <property type="entry name" value="T26747"/>
</dbReference>
<dbReference type="RefSeq" id="NP_499379.2">
    <property type="nucleotide sequence ID" value="NM_066978.4"/>
</dbReference>
<dbReference type="SMR" id="Q9U2M1"/>
<dbReference type="ComplexPortal" id="CPX-1271">
    <property type="entry name" value="Condensin I complex"/>
</dbReference>
<dbReference type="ComplexPortal" id="CPX-1273">
    <property type="entry name" value="Condensin I-like dosage compensation complex"/>
</dbReference>
<dbReference type="FunCoup" id="Q9U2M1">
    <property type="interactions" value="917"/>
</dbReference>
<dbReference type="IntAct" id="Q9U2M1">
    <property type="interactions" value="4"/>
</dbReference>
<dbReference type="STRING" id="6239.Y39A1B.3.1"/>
<dbReference type="PaxDb" id="6239-Y39A1B.3"/>
<dbReference type="PeptideAtlas" id="Q9U2M1"/>
<dbReference type="EnsemblMetazoa" id="Y39A1B.3.1">
    <property type="protein sequence ID" value="Y39A1B.3.1"/>
    <property type="gene ID" value="WBGene00001087"/>
</dbReference>
<dbReference type="GeneID" id="176509"/>
<dbReference type="KEGG" id="cel:CELE_Y39A1B.3"/>
<dbReference type="UCSC" id="Y39A1B.3">
    <property type="organism name" value="c. elegans"/>
</dbReference>
<dbReference type="AGR" id="WB:WBGene00001087"/>
<dbReference type="CTD" id="176509"/>
<dbReference type="WormBase" id="Y39A1B.3">
    <property type="protein sequence ID" value="CE31734"/>
    <property type="gene ID" value="WBGene00001087"/>
    <property type="gene designation" value="dpy-28"/>
</dbReference>
<dbReference type="eggNOG" id="KOG0414">
    <property type="taxonomic scope" value="Eukaryota"/>
</dbReference>
<dbReference type="GeneTree" id="ENSGT00940000153566"/>
<dbReference type="HOGENOM" id="CLU_004539_0_0_1"/>
<dbReference type="InParanoid" id="Q9U2M1"/>
<dbReference type="OMA" id="QEMEVAY"/>
<dbReference type="OrthoDB" id="77601at2759"/>
<dbReference type="PhylomeDB" id="Q9U2M1"/>
<dbReference type="PRO" id="PR:Q9U2M1"/>
<dbReference type="Proteomes" id="UP000001940">
    <property type="component" value="Chromosome III"/>
</dbReference>
<dbReference type="Bgee" id="WBGene00001087">
    <property type="expression patterns" value="Expressed in embryo and 4 other cell types or tissues"/>
</dbReference>
<dbReference type="GO" id="GO:0000779">
    <property type="term" value="C:condensed chromosome, centromeric region"/>
    <property type="evidence" value="ECO:0000318"/>
    <property type="project" value="GO_Central"/>
</dbReference>
<dbReference type="GO" id="GO:0000794">
    <property type="term" value="C:condensed nuclear chromosome"/>
    <property type="evidence" value="ECO:0000314"/>
    <property type="project" value="WormBase"/>
</dbReference>
<dbReference type="GO" id="GO:0000796">
    <property type="term" value="C:condensin complex"/>
    <property type="evidence" value="ECO:0000353"/>
    <property type="project" value="ComplexPortal"/>
</dbReference>
<dbReference type="GO" id="GO:0046536">
    <property type="term" value="C:dosage compensation complex"/>
    <property type="evidence" value="ECO:0000353"/>
    <property type="project" value="WormBase"/>
</dbReference>
<dbReference type="GO" id="GO:0043073">
    <property type="term" value="C:germ cell nucleus"/>
    <property type="evidence" value="ECO:0000314"/>
    <property type="project" value="WormBase"/>
</dbReference>
<dbReference type="GO" id="GO:0005654">
    <property type="term" value="C:nucleoplasm"/>
    <property type="evidence" value="ECO:0000314"/>
    <property type="project" value="WormBase"/>
</dbReference>
<dbReference type="GO" id="GO:0005634">
    <property type="term" value="C:nucleus"/>
    <property type="evidence" value="ECO:0000314"/>
    <property type="project" value="WormBase"/>
</dbReference>
<dbReference type="GO" id="GO:0000805">
    <property type="term" value="C:X chromosome"/>
    <property type="evidence" value="ECO:0000314"/>
    <property type="project" value="WormBase"/>
</dbReference>
<dbReference type="GO" id="GO:0042393">
    <property type="term" value="F:histone binding"/>
    <property type="evidence" value="ECO:0000318"/>
    <property type="project" value="GO_Central"/>
</dbReference>
<dbReference type="GO" id="GO:0051301">
    <property type="term" value="P:cell division"/>
    <property type="evidence" value="ECO:0007669"/>
    <property type="project" value="UniProtKB-KW"/>
</dbReference>
<dbReference type="GO" id="GO:0007059">
    <property type="term" value="P:chromosome segregation"/>
    <property type="evidence" value="ECO:0000315"/>
    <property type="project" value="WormBase"/>
</dbReference>
<dbReference type="GO" id="GO:0042464">
    <property type="term" value="P:dosage compensation by hypoactivation of X chromosome"/>
    <property type="evidence" value="ECO:0000303"/>
    <property type="project" value="ComplexPortal"/>
</dbReference>
<dbReference type="GO" id="GO:0010032">
    <property type="term" value="P:meiotic chromosome condensation"/>
    <property type="evidence" value="ECO:0000318"/>
    <property type="project" value="GO_Central"/>
</dbReference>
<dbReference type="GO" id="GO:0045132">
    <property type="term" value="P:meiotic chromosome segregation"/>
    <property type="evidence" value="ECO:0000303"/>
    <property type="project" value="ComplexPortal"/>
</dbReference>
<dbReference type="GO" id="GO:0045144">
    <property type="term" value="P:meiotic sister chromatid segregation"/>
    <property type="evidence" value="ECO:0000315"/>
    <property type="project" value="WormBase"/>
</dbReference>
<dbReference type="GO" id="GO:0007076">
    <property type="term" value="P:mitotic chromosome condensation"/>
    <property type="evidence" value="ECO:0000318"/>
    <property type="project" value="GO_Central"/>
</dbReference>
<dbReference type="GO" id="GO:0000070">
    <property type="term" value="P:mitotic sister chromatid segregation"/>
    <property type="evidence" value="ECO:0000315"/>
    <property type="project" value="WormBase"/>
</dbReference>
<dbReference type="GO" id="GO:0010629">
    <property type="term" value="P:negative regulation of gene expression"/>
    <property type="evidence" value="ECO:0000303"/>
    <property type="project" value="ComplexPortal"/>
</dbReference>
<dbReference type="GO" id="GO:0045128">
    <property type="term" value="P:negative regulation of reciprocal meiotic recombination"/>
    <property type="evidence" value="ECO:0000315"/>
    <property type="project" value="WormBase"/>
</dbReference>
<dbReference type="FunFam" id="1.25.10.10:FF:001186">
    <property type="entry name" value="Condensin complex subunit 1"/>
    <property type="match status" value="1"/>
</dbReference>
<dbReference type="Gene3D" id="1.25.10.10">
    <property type="entry name" value="Leucine-rich Repeat Variant"/>
    <property type="match status" value="2"/>
</dbReference>
<dbReference type="InterPro" id="IPR011989">
    <property type="entry name" value="ARM-like"/>
</dbReference>
<dbReference type="InterPro" id="IPR016024">
    <property type="entry name" value="ARM-type_fold"/>
</dbReference>
<dbReference type="InterPro" id="IPR026971">
    <property type="entry name" value="CND1/NCAPD3"/>
</dbReference>
<dbReference type="InterPro" id="IPR032682">
    <property type="entry name" value="Cnd1_C"/>
</dbReference>
<dbReference type="InterPro" id="IPR007673">
    <property type="entry name" value="Condensin_cplx_su1"/>
</dbReference>
<dbReference type="PANTHER" id="PTHR14222">
    <property type="entry name" value="CONDENSIN"/>
    <property type="match status" value="1"/>
</dbReference>
<dbReference type="PANTHER" id="PTHR14222:SF2">
    <property type="entry name" value="CONDENSIN COMPLEX SUBUNIT 1"/>
    <property type="match status" value="1"/>
</dbReference>
<dbReference type="Pfam" id="PF12717">
    <property type="entry name" value="Cnd1"/>
    <property type="match status" value="1"/>
</dbReference>
<dbReference type="PIRSF" id="PIRSF017127">
    <property type="entry name" value="Condensin_D2"/>
    <property type="match status" value="1"/>
</dbReference>
<dbReference type="SUPFAM" id="SSF48371">
    <property type="entry name" value="ARM repeat"/>
    <property type="match status" value="1"/>
</dbReference>